<protein>
    <recommendedName>
        <fullName evidence="1">ATP synthase epsilon chain</fullName>
    </recommendedName>
    <alternativeName>
        <fullName evidence="1">ATP synthase F1 sector epsilon subunit</fullName>
    </alternativeName>
    <alternativeName>
        <fullName evidence="1">F-ATPase epsilon subunit</fullName>
    </alternativeName>
</protein>
<dbReference type="EMBL" id="CP000727">
    <property type="protein sequence ID" value="ABS36374.1"/>
    <property type="molecule type" value="Genomic_DNA"/>
</dbReference>
<dbReference type="EMBL" id="AM412317">
    <property type="protein sequence ID" value="CAL81712.1"/>
    <property type="molecule type" value="Genomic_DNA"/>
</dbReference>
<dbReference type="RefSeq" id="WP_003387838.1">
    <property type="nucleotide sequence ID" value="NC_009698.1"/>
</dbReference>
<dbReference type="RefSeq" id="YP_001252704.1">
    <property type="nucleotide sequence ID" value="NC_009495.1"/>
</dbReference>
<dbReference type="RefSeq" id="YP_001386116.1">
    <property type="nucleotide sequence ID" value="NC_009698.1"/>
</dbReference>
<dbReference type="SMR" id="A5HY53"/>
<dbReference type="GeneID" id="5184412"/>
<dbReference type="KEGG" id="cbh:CLC_0205"/>
<dbReference type="KEGG" id="cbo:CBO0157"/>
<dbReference type="PATRIC" id="fig|413999.7.peg.156"/>
<dbReference type="HOGENOM" id="CLU_084338_1_1_9"/>
<dbReference type="PRO" id="PR:A5HY53"/>
<dbReference type="Proteomes" id="UP000001986">
    <property type="component" value="Chromosome"/>
</dbReference>
<dbReference type="GO" id="GO:0005886">
    <property type="term" value="C:plasma membrane"/>
    <property type="evidence" value="ECO:0007669"/>
    <property type="project" value="UniProtKB-SubCell"/>
</dbReference>
<dbReference type="GO" id="GO:0045259">
    <property type="term" value="C:proton-transporting ATP synthase complex"/>
    <property type="evidence" value="ECO:0007669"/>
    <property type="project" value="UniProtKB-KW"/>
</dbReference>
<dbReference type="GO" id="GO:0005524">
    <property type="term" value="F:ATP binding"/>
    <property type="evidence" value="ECO:0007669"/>
    <property type="project" value="UniProtKB-UniRule"/>
</dbReference>
<dbReference type="GO" id="GO:0046933">
    <property type="term" value="F:proton-transporting ATP synthase activity, rotational mechanism"/>
    <property type="evidence" value="ECO:0007669"/>
    <property type="project" value="UniProtKB-UniRule"/>
</dbReference>
<dbReference type="GO" id="GO:0015986">
    <property type="term" value="P:proton motive force-driven ATP synthesis"/>
    <property type="evidence" value="ECO:0000318"/>
    <property type="project" value="GO_Central"/>
</dbReference>
<dbReference type="CDD" id="cd12152">
    <property type="entry name" value="F1-ATPase_delta"/>
    <property type="match status" value="1"/>
</dbReference>
<dbReference type="Gene3D" id="1.20.5.440">
    <property type="entry name" value="ATP synthase delta/epsilon subunit, C-terminal domain"/>
    <property type="match status" value="1"/>
</dbReference>
<dbReference type="Gene3D" id="2.60.15.10">
    <property type="entry name" value="F0F1 ATP synthase delta/epsilon subunit, N-terminal"/>
    <property type="match status" value="1"/>
</dbReference>
<dbReference type="HAMAP" id="MF_00530">
    <property type="entry name" value="ATP_synth_epsil_bac"/>
    <property type="match status" value="1"/>
</dbReference>
<dbReference type="InterPro" id="IPR036794">
    <property type="entry name" value="ATP_F1_dsu/esu_C_sf"/>
</dbReference>
<dbReference type="InterPro" id="IPR001469">
    <property type="entry name" value="ATP_synth_F1_dsu/esu"/>
</dbReference>
<dbReference type="InterPro" id="IPR020546">
    <property type="entry name" value="ATP_synth_F1_dsu/esu_N"/>
</dbReference>
<dbReference type="InterPro" id="IPR020547">
    <property type="entry name" value="ATP_synth_F1_esu_C"/>
</dbReference>
<dbReference type="InterPro" id="IPR036771">
    <property type="entry name" value="ATPsynth_dsu/esu_N"/>
</dbReference>
<dbReference type="NCBIfam" id="TIGR01216">
    <property type="entry name" value="ATP_synt_epsi"/>
    <property type="match status" value="1"/>
</dbReference>
<dbReference type="NCBIfam" id="NF009984">
    <property type="entry name" value="PRK13450.1"/>
    <property type="match status" value="1"/>
</dbReference>
<dbReference type="PANTHER" id="PTHR13822">
    <property type="entry name" value="ATP SYNTHASE DELTA/EPSILON CHAIN"/>
    <property type="match status" value="1"/>
</dbReference>
<dbReference type="PANTHER" id="PTHR13822:SF10">
    <property type="entry name" value="ATP SYNTHASE EPSILON CHAIN, CHLOROPLASTIC"/>
    <property type="match status" value="1"/>
</dbReference>
<dbReference type="Pfam" id="PF00401">
    <property type="entry name" value="ATP-synt_DE"/>
    <property type="match status" value="1"/>
</dbReference>
<dbReference type="Pfam" id="PF02823">
    <property type="entry name" value="ATP-synt_DE_N"/>
    <property type="match status" value="1"/>
</dbReference>
<dbReference type="SUPFAM" id="SSF46604">
    <property type="entry name" value="Epsilon subunit of F1F0-ATP synthase C-terminal domain"/>
    <property type="match status" value="1"/>
</dbReference>
<dbReference type="SUPFAM" id="SSF51344">
    <property type="entry name" value="Epsilon subunit of F1F0-ATP synthase N-terminal domain"/>
    <property type="match status" value="1"/>
</dbReference>
<organism>
    <name type="scientific">Clostridium botulinum (strain Hall / ATCC 3502 / NCTC 13319 / Type A)</name>
    <dbReference type="NCBI Taxonomy" id="441771"/>
    <lineage>
        <taxon>Bacteria</taxon>
        <taxon>Bacillati</taxon>
        <taxon>Bacillota</taxon>
        <taxon>Clostridia</taxon>
        <taxon>Eubacteriales</taxon>
        <taxon>Clostridiaceae</taxon>
        <taxon>Clostridium</taxon>
    </lineage>
</organism>
<reference key="1">
    <citation type="journal article" date="2007" name="Genome Res.">
        <title>Genome sequence of a proteolytic (Group I) Clostridium botulinum strain Hall A and comparative analysis of the clostridial genomes.</title>
        <authorList>
            <person name="Sebaihia M."/>
            <person name="Peck M.W."/>
            <person name="Minton N.P."/>
            <person name="Thomson N.R."/>
            <person name="Holden M.T.G."/>
            <person name="Mitchell W.J."/>
            <person name="Carter A.T."/>
            <person name="Bentley S.D."/>
            <person name="Mason D.R."/>
            <person name="Crossman L."/>
            <person name="Paul C.J."/>
            <person name="Ivens A."/>
            <person name="Wells-Bennik M.H.J."/>
            <person name="Davis I.J."/>
            <person name="Cerdeno-Tarraga A.M."/>
            <person name="Churcher C."/>
            <person name="Quail M.A."/>
            <person name="Chillingworth T."/>
            <person name="Feltwell T."/>
            <person name="Fraser A."/>
            <person name="Goodhead I."/>
            <person name="Hance Z."/>
            <person name="Jagels K."/>
            <person name="Larke N."/>
            <person name="Maddison M."/>
            <person name="Moule S."/>
            <person name="Mungall K."/>
            <person name="Norbertczak H."/>
            <person name="Rabbinowitsch E."/>
            <person name="Sanders M."/>
            <person name="Simmonds M."/>
            <person name="White B."/>
            <person name="Whithead S."/>
            <person name="Parkhill J."/>
        </authorList>
    </citation>
    <scope>NUCLEOTIDE SEQUENCE [LARGE SCALE GENOMIC DNA]</scope>
    <source>
        <strain>Hall / ATCC 3502 / NCTC 13319 / Type A</strain>
    </source>
</reference>
<reference key="2">
    <citation type="journal article" date="2007" name="PLoS ONE">
        <title>Analysis of the neurotoxin complex genes in Clostridium botulinum A1-A4 and B1 strains: BoNT/A3, /Ba4 and /B1 clusters are located within plasmids.</title>
        <authorList>
            <person name="Smith T.J."/>
            <person name="Hill K.K."/>
            <person name="Foley B.T."/>
            <person name="Detter J.C."/>
            <person name="Munk A.C."/>
            <person name="Bruce D.C."/>
            <person name="Doggett N.A."/>
            <person name="Smith L.A."/>
            <person name="Marks J.D."/>
            <person name="Xie G."/>
            <person name="Brettin T.S."/>
        </authorList>
    </citation>
    <scope>NUCLEOTIDE SEQUENCE [LARGE SCALE GENOMIC DNA]</scope>
    <source>
        <strain>Hall / ATCC 3502 / NCTC 13319 / Type A</strain>
    </source>
</reference>
<evidence type="ECO:0000255" key="1">
    <source>
        <dbReference type="HAMAP-Rule" id="MF_00530"/>
    </source>
</evidence>
<name>ATPE_CLOBH</name>
<gene>
    <name evidence="1" type="primary">atpC</name>
    <name type="ordered locus">CBO0157</name>
    <name type="ordered locus">CLC_0205</name>
</gene>
<accession>A5HY53</accession>
<accession>A7G073</accession>
<feature type="chain" id="PRO_1000056474" description="ATP synthase epsilon chain">
    <location>
        <begin position="1"/>
        <end position="133"/>
    </location>
</feature>
<sequence length="133" mass="15267">MKDNIELTIFTPEKNIKIGEIKEVITEGLDGDLAILPNHVNMITYLKPTITKYIDLNGNKNNIFTSSGVLKVEDNKVYIICDASEKPEDIDIKRAENARKRAEERLRNKKEIDVKRAELALFRSIARIKIKEL</sequence>
<proteinExistence type="inferred from homology"/>
<keyword id="KW-0066">ATP synthesis</keyword>
<keyword id="KW-1003">Cell membrane</keyword>
<keyword id="KW-0139">CF(1)</keyword>
<keyword id="KW-0375">Hydrogen ion transport</keyword>
<keyword id="KW-0406">Ion transport</keyword>
<keyword id="KW-0472">Membrane</keyword>
<keyword id="KW-1185">Reference proteome</keyword>
<keyword id="KW-0813">Transport</keyword>
<comment type="function">
    <text evidence="1">Produces ATP from ADP in the presence of a proton gradient across the membrane.</text>
</comment>
<comment type="subunit">
    <text evidence="1">F-type ATPases have 2 components, CF(1) - the catalytic core - and CF(0) - the membrane proton channel. CF(1) has five subunits: alpha(3), beta(3), gamma(1), delta(1), epsilon(1). CF(0) has three main subunits: a, b and c.</text>
</comment>
<comment type="subcellular location">
    <subcellularLocation>
        <location evidence="1">Cell membrane</location>
        <topology evidence="1">Peripheral membrane protein</topology>
    </subcellularLocation>
</comment>
<comment type="similarity">
    <text evidence="1">Belongs to the ATPase epsilon chain family.</text>
</comment>